<proteinExistence type="inferred from homology"/>
<dbReference type="EC" id="3.1.1.29" evidence="1"/>
<dbReference type="EMBL" id="AM406670">
    <property type="protein sequence ID" value="CAL93370.1"/>
    <property type="molecule type" value="Genomic_DNA"/>
</dbReference>
<dbReference type="RefSeq" id="WP_011764487.1">
    <property type="nucleotide sequence ID" value="NC_008702.1"/>
</dbReference>
<dbReference type="SMR" id="A1K3G5"/>
<dbReference type="STRING" id="62928.azo0753"/>
<dbReference type="KEGG" id="azo:azo0753"/>
<dbReference type="eggNOG" id="COG0193">
    <property type="taxonomic scope" value="Bacteria"/>
</dbReference>
<dbReference type="HOGENOM" id="CLU_062456_3_1_4"/>
<dbReference type="Proteomes" id="UP000002588">
    <property type="component" value="Chromosome"/>
</dbReference>
<dbReference type="GO" id="GO:0005737">
    <property type="term" value="C:cytoplasm"/>
    <property type="evidence" value="ECO:0007669"/>
    <property type="project" value="UniProtKB-SubCell"/>
</dbReference>
<dbReference type="GO" id="GO:0004045">
    <property type="term" value="F:peptidyl-tRNA hydrolase activity"/>
    <property type="evidence" value="ECO:0007669"/>
    <property type="project" value="UniProtKB-UniRule"/>
</dbReference>
<dbReference type="GO" id="GO:0000049">
    <property type="term" value="F:tRNA binding"/>
    <property type="evidence" value="ECO:0007669"/>
    <property type="project" value="UniProtKB-UniRule"/>
</dbReference>
<dbReference type="GO" id="GO:0006515">
    <property type="term" value="P:protein quality control for misfolded or incompletely synthesized proteins"/>
    <property type="evidence" value="ECO:0007669"/>
    <property type="project" value="UniProtKB-UniRule"/>
</dbReference>
<dbReference type="GO" id="GO:0072344">
    <property type="term" value="P:rescue of stalled ribosome"/>
    <property type="evidence" value="ECO:0007669"/>
    <property type="project" value="UniProtKB-UniRule"/>
</dbReference>
<dbReference type="CDD" id="cd00462">
    <property type="entry name" value="PTH"/>
    <property type="match status" value="1"/>
</dbReference>
<dbReference type="FunFam" id="3.40.50.1470:FF:000001">
    <property type="entry name" value="Peptidyl-tRNA hydrolase"/>
    <property type="match status" value="1"/>
</dbReference>
<dbReference type="Gene3D" id="3.40.50.1470">
    <property type="entry name" value="Peptidyl-tRNA hydrolase"/>
    <property type="match status" value="1"/>
</dbReference>
<dbReference type="HAMAP" id="MF_00083">
    <property type="entry name" value="Pept_tRNA_hydro_bact"/>
    <property type="match status" value="1"/>
</dbReference>
<dbReference type="InterPro" id="IPR001328">
    <property type="entry name" value="Pept_tRNA_hydro"/>
</dbReference>
<dbReference type="InterPro" id="IPR018171">
    <property type="entry name" value="Pept_tRNA_hydro_CS"/>
</dbReference>
<dbReference type="InterPro" id="IPR036416">
    <property type="entry name" value="Pept_tRNA_hydro_sf"/>
</dbReference>
<dbReference type="NCBIfam" id="TIGR00447">
    <property type="entry name" value="pth"/>
    <property type="match status" value="1"/>
</dbReference>
<dbReference type="PANTHER" id="PTHR17224">
    <property type="entry name" value="PEPTIDYL-TRNA HYDROLASE"/>
    <property type="match status" value="1"/>
</dbReference>
<dbReference type="PANTHER" id="PTHR17224:SF1">
    <property type="entry name" value="PEPTIDYL-TRNA HYDROLASE"/>
    <property type="match status" value="1"/>
</dbReference>
<dbReference type="Pfam" id="PF01195">
    <property type="entry name" value="Pept_tRNA_hydro"/>
    <property type="match status" value="1"/>
</dbReference>
<dbReference type="SUPFAM" id="SSF53178">
    <property type="entry name" value="Peptidyl-tRNA hydrolase-like"/>
    <property type="match status" value="1"/>
</dbReference>
<dbReference type="PROSITE" id="PS01196">
    <property type="entry name" value="PEPT_TRNA_HYDROL_2"/>
    <property type="match status" value="1"/>
</dbReference>
<organism>
    <name type="scientific">Azoarcus sp. (strain BH72)</name>
    <dbReference type="NCBI Taxonomy" id="418699"/>
    <lineage>
        <taxon>Bacteria</taxon>
        <taxon>Pseudomonadati</taxon>
        <taxon>Pseudomonadota</taxon>
        <taxon>Betaproteobacteria</taxon>
        <taxon>Rhodocyclales</taxon>
        <taxon>Zoogloeaceae</taxon>
        <taxon>Azoarcus</taxon>
    </lineage>
</organism>
<evidence type="ECO:0000255" key="1">
    <source>
        <dbReference type="HAMAP-Rule" id="MF_00083"/>
    </source>
</evidence>
<evidence type="ECO:0000256" key="2">
    <source>
        <dbReference type="SAM" id="MobiDB-lite"/>
    </source>
</evidence>
<keyword id="KW-0963">Cytoplasm</keyword>
<keyword id="KW-0378">Hydrolase</keyword>
<keyword id="KW-1185">Reference proteome</keyword>
<keyword id="KW-0694">RNA-binding</keyword>
<keyword id="KW-0820">tRNA-binding</keyword>
<sequence>MSAAPPRLVVGLGNPGAEYSETRHNAGFWFCERLADTLGVRFSHESRFHGLVANAREAGVWLLMPQTYMNRSGQAIGALARFYRIAPAEILVVHDELDIPPGQLRLKFGGGLGGHNGLKDTSAHLGTNDYWRLRVGIGHPGDRNEVVNFVLKPARREEQTLIDESLDRALAAWPTLAKGDWNTATQRLNARPAPPKPPKAPKAPQPAAADQPKDESQP</sequence>
<comment type="function">
    <text evidence="1">Hydrolyzes ribosome-free peptidyl-tRNAs (with 1 or more amino acids incorporated), which drop off the ribosome during protein synthesis, or as a result of ribosome stalling.</text>
</comment>
<comment type="function">
    <text evidence="1">Catalyzes the release of premature peptidyl moieties from peptidyl-tRNA molecules trapped in stalled 50S ribosomal subunits, and thus maintains levels of free tRNAs and 50S ribosomes.</text>
</comment>
<comment type="catalytic activity">
    <reaction evidence="1">
        <text>an N-acyl-L-alpha-aminoacyl-tRNA + H2O = an N-acyl-L-amino acid + a tRNA + H(+)</text>
        <dbReference type="Rhea" id="RHEA:54448"/>
        <dbReference type="Rhea" id="RHEA-COMP:10123"/>
        <dbReference type="Rhea" id="RHEA-COMP:13883"/>
        <dbReference type="ChEBI" id="CHEBI:15377"/>
        <dbReference type="ChEBI" id="CHEBI:15378"/>
        <dbReference type="ChEBI" id="CHEBI:59874"/>
        <dbReference type="ChEBI" id="CHEBI:78442"/>
        <dbReference type="ChEBI" id="CHEBI:138191"/>
        <dbReference type="EC" id="3.1.1.29"/>
    </reaction>
</comment>
<comment type="subunit">
    <text evidence="1">Monomer.</text>
</comment>
<comment type="subcellular location">
    <subcellularLocation>
        <location evidence="1">Cytoplasm</location>
    </subcellularLocation>
</comment>
<comment type="similarity">
    <text evidence="1">Belongs to the PTH family.</text>
</comment>
<reference key="1">
    <citation type="journal article" date="2006" name="Nat. Biotechnol.">
        <title>Complete genome of the mutualistic, N2-fixing grass endophyte Azoarcus sp. strain BH72.</title>
        <authorList>
            <person name="Krause A."/>
            <person name="Ramakumar A."/>
            <person name="Bartels D."/>
            <person name="Battistoni F."/>
            <person name="Bekel T."/>
            <person name="Boch J."/>
            <person name="Boehm M."/>
            <person name="Friedrich F."/>
            <person name="Hurek T."/>
            <person name="Krause L."/>
            <person name="Linke B."/>
            <person name="McHardy A.C."/>
            <person name="Sarkar A."/>
            <person name="Schneiker S."/>
            <person name="Syed A.A."/>
            <person name="Thauer R."/>
            <person name="Vorhoelter F.-J."/>
            <person name="Weidner S."/>
            <person name="Puehler A."/>
            <person name="Reinhold-Hurek B."/>
            <person name="Kaiser O."/>
            <person name="Goesmann A."/>
        </authorList>
    </citation>
    <scope>NUCLEOTIDE SEQUENCE [LARGE SCALE GENOMIC DNA]</scope>
    <source>
        <strain>BH72</strain>
    </source>
</reference>
<accession>A1K3G5</accession>
<feature type="chain" id="PRO_1000010561" description="Peptidyl-tRNA hydrolase">
    <location>
        <begin position="1"/>
        <end position="218"/>
    </location>
</feature>
<feature type="region of interest" description="Disordered" evidence="2">
    <location>
        <begin position="181"/>
        <end position="218"/>
    </location>
</feature>
<feature type="compositionally biased region" description="Pro residues" evidence="2">
    <location>
        <begin position="192"/>
        <end position="204"/>
    </location>
</feature>
<feature type="active site" description="Proton acceptor" evidence="1">
    <location>
        <position position="24"/>
    </location>
</feature>
<feature type="binding site" evidence="1">
    <location>
        <position position="19"/>
    </location>
    <ligand>
        <name>tRNA</name>
        <dbReference type="ChEBI" id="CHEBI:17843"/>
    </ligand>
</feature>
<feature type="binding site" evidence="1">
    <location>
        <position position="68"/>
    </location>
    <ligand>
        <name>tRNA</name>
        <dbReference type="ChEBI" id="CHEBI:17843"/>
    </ligand>
</feature>
<feature type="binding site" evidence="1">
    <location>
        <position position="70"/>
    </location>
    <ligand>
        <name>tRNA</name>
        <dbReference type="ChEBI" id="CHEBI:17843"/>
    </ligand>
</feature>
<feature type="binding site" evidence="1">
    <location>
        <position position="116"/>
    </location>
    <ligand>
        <name>tRNA</name>
        <dbReference type="ChEBI" id="CHEBI:17843"/>
    </ligand>
</feature>
<feature type="site" description="Discriminates between blocked and unblocked aminoacyl-tRNA" evidence="1">
    <location>
        <position position="14"/>
    </location>
</feature>
<feature type="site" description="Stabilizes the basic form of H active site to accept a proton" evidence="1">
    <location>
        <position position="95"/>
    </location>
</feature>
<gene>
    <name evidence="1" type="primary">pth</name>
    <name type="ordered locus">azo0753</name>
</gene>
<protein>
    <recommendedName>
        <fullName evidence="1">Peptidyl-tRNA hydrolase</fullName>
        <shortName evidence="1">Pth</shortName>
        <ecNumber evidence="1">3.1.1.29</ecNumber>
    </recommendedName>
</protein>
<name>PTH_AZOSB</name>